<accession>Q0P5N2</accession>
<organism>
    <name type="scientific">Bos taurus</name>
    <name type="common">Bovine</name>
    <dbReference type="NCBI Taxonomy" id="9913"/>
    <lineage>
        <taxon>Eukaryota</taxon>
        <taxon>Metazoa</taxon>
        <taxon>Chordata</taxon>
        <taxon>Craniata</taxon>
        <taxon>Vertebrata</taxon>
        <taxon>Euteleostomi</taxon>
        <taxon>Mammalia</taxon>
        <taxon>Eutheria</taxon>
        <taxon>Laurasiatheria</taxon>
        <taxon>Artiodactyla</taxon>
        <taxon>Ruminantia</taxon>
        <taxon>Pecora</taxon>
        <taxon>Bovidae</taxon>
        <taxon>Bovinae</taxon>
        <taxon>Bos</taxon>
    </lineage>
</organism>
<comment type="subcellular location">
    <subcellularLocation>
        <location evidence="1">Nucleus</location>
        <location evidence="1">Nucleolus</location>
    </subcellularLocation>
</comment>
<comment type="PTM">
    <text evidence="1">Ubiquitinated by the CRL2(APPBP2) complex, which recognizes the Arg-Xaa-Xaa-Gly sequence at the C-terminus, leading to its degradation.</text>
</comment>
<comment type="similarity">
    <text evidence="3">Belongs to the nucleosome assembly protein (NAP) family.</text>
</comment>
<dbReference type="EMBL" id="BC119828">
    <property type="protein sequence ID" value="AAI19829.1"/>
    <property type="molecule type" value="mRNA"/>
</dbReference>
<dbReference type="RefSeq" id="NP_001069579.1">
    <property type="nucleotide sequence ID" value="NM_001076111.2"/>
</dbReference>
<dbReference type="SMR" id="Q0P5N2"/>
<dbReference type="FunCoup" id="Q0P5N2">
    <property type="interactions" value="1026"/>
</dbReference>
<dbReference type="STRING" id="9913.ENSBTAP00000052314"/>
<dbReference type="PaxDb" id="9913-ENSBTAP00000052314"/>
<dbReference type="Ensembl" id="ENSBTAT00000014457.7">
    <property type="protein sequence ID" value="ENSBTAP00000052314.2"/>
    <property type="gene ID" value="ENSBTAG00000010885.7"/>
</dbReference>
<dbReference type="Ensembl" id="ENSBTAT00000091234.1">
    <property type="protein sequence ID" value="ENSBTAP00000084770.1"/>
    <property type="gene ID" value="ENSBTAG00000010885.7"/>
</dbReference>
<dbReference type="GeneID" id="538541"/>
<dbReference type="KEGG" id="bta:538541"/>
<dbReference type="CTD" id="7259"/>
<dbReference type="VEuPathDB" id="HostDB:ENSBTAG00000010885"/>
<dbReference type="VGNC" id="VGNC:53811">
    <property type="gene designation" value="TSPYL1"/>
</dbReference>
<dbReference type="eggNOG" id="KOG1508">
    <property type="taxonomic scope" value="Eukaryota"/>
</dbReference>
<dbReference type="GeneTree" id="ENSGT00940000162821"/>
<dbReference type="HOGENOM" id="CLU_051687_2_0_1"/>
<dbReference type="InParanoid" id="Q0P5N2"/>
<dbReference type="OMA" id="RRGYEPQ"/>
<dbReference type="OrthoDB" id="19419at2759"/>
<dbReference type="TreeFam" id="TF313386"/>
<dbReference type="Proteomes" id="UP000009136">
    <property type="component" value="Chromosome 9"/>
</dbReference>
<dbReference type="Bgee" id="ENSBTAG00000010885">
    <property type="expression patterns" value="Expressed in adenohypophysis and 105 other cell types or tissues"/>
</dbReference>
<dbReference type="GO" id="GO:0000785">
    <property type="term" value="C:chromatin"/>
    <property type="evidence" value="ECO:0000318"/>
    <property type="project" value="GO_Central"/>
</dbReference>
<dbReference type="GO" id="GO:0005730">
    <property type="term" value="C:nucleolus"/>
    <property type="evidence" value="ECO:0007669"/>
    <property type="project" value="UniProtKB-SubCell"/>
</dbReference>
<dbReference type="GO" id="GO:0005654">
    <property type="term" value="C:nucleoplasm"/>
    <property type="evidence" value="ECO:0007669"/>
    <property type="project" value="Ensembl"/>
</dbReference>
<dbReference type="GO" id="GO:0005634">
    <property type="term" value="C:nucleus"/>
    <property type="evidence" value="ECO:0000318"/>
    <property type="project" value="GO_Central"/>
</dbReference>
<dbReference type="GO" id="GO:0003682">
    <property type="term" value="F:chromatin binding"/>
    <property type="evidence" value="ECO:0000318"/>
    <property type="project" value="GO_Central"/>
</dbReference>
<dbReference type="GO" id="GO:0019899">
    <property type="term" value="F:enzyme binding"/>
    <property type="evidence" value="ECO:0007669"/>
    <property type="project" value="Ensembl"/>
</dbReference>
<dbReference type="GO" id="GO:0042393">
    <property type="term" value="F:histone binding"/>
    <property type="evidence" value="ECO:0000318"/>
    <property type="project" value="GO_Central"/>
</dbReference>
<dbReference type="GO" id="GO:0006334">
    <property type="term" value="P:nucleosome assembly"/>
    <property type="evidence" value="ECO:0007669"/>
    <property type="project" value="InterPro"/>
</dbReference>
<dbReference type="FunFam" id="3.30.1120.90:FF:000002">
    <property type="entry name" value="Testis-specific Y-encoded-like protein 2"/>
    <property type="match status" value="1"/>
</dbReference>
<dbReference type="Gene3D" id="1.20.5.1500">
    <property type="match status" value="1"/>
</dbReference>
<dbReference type="Gene3D" id="3.30.1120.90">
    <property type="entry name" value="Nucleosome assembly protein"/>
    <property type="match status" value="1"/>
</dbReference>
<dbReference type="InterPro" id="IPR037231">
    <property type="entry name" value="NAP-like_sf"/>
</dbReference>
<dbReference type="InterPro" id="IPR002164">
    <property type="entry name" value="NAP_family"/>
</dbReference>
<dbReference type="PANTHER" id="PTHR11875">
    <property type="entry name" value="TESTIS-SPECIFIC Y-ENCODED PROTEIN"/>
    <property type="match status" value="1"/>
</dbReference>
<dbReference type="Pfam" id="PF00956">
    <property type="entry name" value="NAP"/>
    <property type="match status" value="1"/>
</dbReference>
<dbReference type="SUPFAM" id="SSF143113">
    <property type="entry name" value="NAP-like"/>
    <property type="match status" value="1"/>
</dbReference>
<evidence type="ECO:0000250" key="1">
    <source>
        <dbReference type="UniProtKB" id="Q9H0U9"/>
    </source>
</evidence>
<evidence type="ECO:0000256" key="2">
    <source>
        <dbReference type="SAM" id="MobiDB-lite"/>
    </source>
</evidence>
<evidence type="ECO:0000305" key="3"/>
<proteinExistence type="evidence at transcript level"/>
<keyword id="KW-1017">Isopeptide bond</keyword>
<keyword id="KW-0539">Nucleus</keyword>
<keyword id="KW-1185">Reference proteome</keyword>
<keyword id="KW-0832">Ubl conjugation</keyword>
<name>TSYL1_BOVIN</name>
<gene>
    <name type="primary">TSPYL1</name>
</gene>
<protein>
    <recommendedName>
        <fullName>Testis-specific Y-encoded-like protein 1</fullName>
        <shortName>TSPY-like protein 1</shortName>
    </recommendedName>
</protein>
<sequence>MSGRDGGERTPLLEAHSLTTSDCAAGAPDPSRCLKTEASQVMAETGEGYFEAVALPPPQLPEEESAPSTAPSDPGCAGTFQIRAGGDGGYVVPEARLEPAPPPTESLETASVSLATDDSLGNGCQPGEPQGLSREKPLETCGAEKLGSDLMAEAKAEEVKTEEGPVFSVAVDEEVVGKEGAKEEEGVEQGMEVEERPVGEEIEMVENRVVEEAGHRPLRMDLRMNPLEAIQLELDSVNAQADRAFQQLEHKFGRMRRHYLERRNYIIQNIPGFWVTAFRNHPQLSPMIRGQDAEMLRYITNLEVKELRHPRTGCKFKFFFRRNPYFRNKLIVKEYEVRASGRVVSLSTPIIWRRGHEPQSFIRRNQEVVCNFFTWFSDHSLPESDRIAEIIKEDLWPNPLQYYLLREGVRRARRRPIREPVEIPRPFGFQSG</sequence>
<reference key="1">
    <citation type="submission" date="2006-08" db="EMBL/GenBank/DDBJ databases">
        <authorList>
            <consortium name="NIH - Mammalian Gene Collection (MGC) project"/>
        </authorList>
    </citation>
    <scope>NUCLEOTIDE SEQUENCE [LARGE SCALE MRNA]</scope>
    <source>
        <strain>Hereford</strain>
        <tissue>Heart ventricle</tissue>
    </source>
</reference>
<feature type="chain" id="PRO_0000317138" description="Testis-specific Y-encoded-like protein 1">
    <location>
        <begin position="1"/>
        <end position="432"/>
    </location>
</feature>
<feature type="region of interest" description="Disordered" evidence="2">
    <location>
        <begin position="1"/>
        <end position="31"/>
    </location>
</feature>
<feature type="region of interest" description="Disordered" evidence="2">
    <location>
        <begin position="54"/>
        <end position="110"/>
    </location>
</feature>
<feature type="region of interest" description="Disordered" evidence="2">
    <location>
        <begin position="116"/>
        <end position="135"/>
    </location>
</feature>
<feature type="cross-link" description="Glycyl lysine isopeptide (Lys-Gly) (interchain with G-Cter in SUMO2)" evidence="1">
    <location>
        <position position="160"/>
    </location>
</feature>